<protein>
    <recommendedName>
        <fullName evidence="1">Fumarate reductase subunit C</fullName>
    </recommendedName>
    <alternativeName>
        <fullName evidence="1">Fumarate reductase 15 kDa hydrophobic protein</fullName>
    </alternativeName>
    <alternativeName>
        <fullName evidence="1">Quinol-fumarate reductase subunit C</fullName>
        <shortName evidence="1">QFR subunit C</shortName>
    </alternativeName>
</protein>
<gene>
    <name evidence="1" type="primary">frdC</name>
    <name type="ordered locus">SPA4158</name>
</gene>
<name>FRDC_SALPA</name>
<dbReference type="EMBL" id="CP000026">
    <property type="protein sequence ID" value="AAV79899.1"/>
    <property type="molecule type" value="Genomic_DNA"/>
</dbReference>
<dbReference type="RefSeq" id="WP_000208749.1">
    <property type="nucleotide sequence ID" value="NC_006511.1"/>
</dbReference>
<dbReference type="SMR" id="Q5PL70"/>
<dbReference type="KEGG" id="spt:SPA4158"/>
<dbReference type="HOGENOM" id="CLU_156492_0_0_6"/>
<dbReference type="Proteomes" id="UP000008185">
    <property type="component" value="Chromosome"/>
</dbReference>
<dbReference type="GO" id="GO:0045283">
    <property type="term" value="C:fumarate reductase complex"/>
    <property type="evidence" value="ECO:0007669"/>
    <property type="project" value="UniProtKB-UniRule"/>
</dbReference>
<dbReference type="GO" id="GO:0005886">
    <property type="term" value="C:plasma membrane"/>
    <property type="evidence" value="ECO:0007669"/>
    <property type="project" value="UniProtKB-SubCell"/>
</dbReference>
<dbReference type="GO" id="GO:0000104">
    <property type="term" value="F:succinate dehydrogenase activity"/>
    <property type="evidence" value="ECO:0007669"/>
    <property type="project" value="UniProtKB-UniRule"/>
</dbReference>
<dbReference type="CDD" id="cd00546">
    <property type="entry name" value="QFR_TypeD_subunitC"/>
    <property type="match status" value="1"/>
</dbReference>
<dbReference type="Gene3D" id="1.20.1300.10">
    <property type="entry name" value="Fumarate reductase/succinate dehydrogenase, transmembrane subunit"/>
    <property type="match status" value="1"/>
</dbReference>
<dbReference type="HAMAP" id="MF_00708">
    <property type="entry name" value="Fumarate_red_C"/>
    <property type="match status" value="1"/>
</dbReference>
<dbReference type="InterPro" id="IPR003510">
    <property type="entry name" value="Fumarate_red_C"/>
</dbReference>
<dbReference type="InterPro" id="IPR034804">
    <property type="entry name" value="SQR/QFR_C/D"/>
</dbReference>
<dbReference type="NCBIfam" id="NF003445">
    <property type="entry name" value="PRK04987.1"/>
    <property type="match status" value="1"/>
</dbReference>
<dbReference type="Pfam" id="PF02300">
    <property type="entry name" value="Fumarate_red_C"/>
    <property type="match status" value="1"/>
</dbReference>
<dbReference type="PIRSF" id="PIRSF000180">
    <property type="entry name" value="FrdC"/>
    <property type="match status" value="1"/>
</dbReference>
<dbReference type="SUPFAM" id="SSF81343">
    <property type="entry name" value="Fumarate reductase respiratory complex transmembrane subunits"/>
    <property type="match status" value="1"/>
</dbReference>
<accession>Q5PL70</accession>
<feature type="chain" id="PRO_1000045531" description="Fumarate reductase subunit C">
    <location>
        <begin position="1"/>
        <end position="131"/>
    </location>
</feature>
<feature type="transmembrane region" description="Helical" evidence="1">
    <location>
        <begin position="30"/>
        <end position="50"/>
    </location>
</feature>
<feature type="transmembrane region" description="Helical" evidence="1">
    <location>
        <begin position="57"/>
        <end position="77"/>
    </location>
</feature>
<feature type="transmembrane region" description="Helical" evidence="1">
    <location>
        <begin position="109"/>
        <end position="129"/>
    </location>
</feature>
<organism>
    <name type="scientific">Salmonella paratyphi A (strain ATCC 9150 / SARB42)</name>
    <dbReference type="NCBI Taxonomy" id="295319"/>
    <lineage>
        <taxon>Bacteria</taxon>
        <taxon>Pseudomonadati</taxon>
        <taxon>Pseudomonadota</taxon>
        <taxon>Gammaproteobacteria</taxon>
        <taxon>Enterobacterales</taxon>
        <taxon>Enterobacteriaceae</taxon>
        <taxon>Salmonella</taxon>
    </lineage>
</organism>
<sequence>MTTKRKPYVRPMTSTWWKKLPFYRFYMLREGTAVPAVWFSIELIFGLFALKHGAESWMGFVGFLQNPVVVILNLITLAAALLHTKTWFELAPKAANIIVKDEKMGPEPIIKGLWVVTAVVTVVILYVALFW</sequence>
<comment type="function">
    <text evidence="1">Two distinct, membrane-bound, FAD-containing enzymes are responsible for the catalysis of fumarate and succinate interconversion; fumarate reductase is used in anaerobic growth, and succinate dehydrogenase is used in aerobic growth. Anchors the catalytic components of the fumarate reductase complex to the cell inner membrane, binds quinones.</text>
</comment>
<comment type="subunit">
    <text evidence="1">Part of an enzyme complex containing four subunits: a flavoprotein (FrdA), an iron-sulfur protein (FrdB), and two hydrophobic anchor proteins (FrdC and FrdD).</text>
</comment>
<comment type="subcellular location">
    <subcellularLocation>
        <location evidence="1">Cell inner membrane</location>
        <topology evidence="1">Multi-pass membrane protein</topology>
    </subcellularLocation>
</comment>
<comment type="similarity">
    <text evidence="1">Belongs to the FrdC family.</text>
</comment>
<evidence type="ECO:0000255" key="1">
    <source>
        <dbReference type="HAMAP-Rule" id="MF_00708"/>
    </source>
</evidence>
<proteinExistence type="inferred from homology"/>
<reference key="1">
    <citation type="journal article" date="2004" name="Nat. Genet.">
        <title>Comparison of genome degradation in Paratyphi A and Typhi, human-restricted serovars of Salmonella enterica that cause typhoid.</title>
        <authorList>
            <person name="McClelland M."/>
            <person name="Sanderson K.E."/>
            <person name="Clifton S.W."/>
            <person name="Latreille P."/>
            <person name="Porwollik S."/>
            <person name="Sabo A."/>
            <person name="Meyer R."/>
            <person name="Bieri T."/>
            <person name="Ozersky P."/>
            <person name="McLellan M."/>
            <person name="Harkins C.R."/>
            <person name="Wang C."/>
            <person name="Nguyen C."/>
            <person name="Berghoff A."/>
            <person name="Elliott G."/>
            <person name="Kohlberg S."/>
            <person name="Strong C."/>
            <person name="Du F."/>
            <person name="Carter J."/>
            <person name="Kremizki C."/>
            <person name="Layman D."/>
            <person name="Leonard S."/>
            <person name="Sun H."/>
            <person name="Fulton L."/>
            <person name="Nash W."/>
            <person name="Miner T."/>
            <person name="Minx P."/>
            <person name="Delehaunty K."/>
            <person name="Fronick C."/>
            <person name="Magrini V."/>
            <person name="Nhan M."/>
            <person name="Warren W."/>
            <person name="Florea L."/>
            <person name="Spieth J."/>
            <person name="Wilson R.K."/>
        </authorList>
    </citation>
    <scope>NUCLEOTIDE SEQUENCE [LARGE SCALE GENOMIC DNA]</scope>
    <source>
        <strain>ATCC 9150 / SARB42</strain>
    </source>
</reference>
<keyword id="KW-0997">Cell inner membrane</keyword>
<keyword id="KW-1003">Cell membrane</keyword>
<keyword id="KW-0472">Membrane</keyword>
<keyword id="KW-0812">Transmembrane</keyword>
<keyword id="KW-1133">Transmembrane helix</keyword>